<accession>Q2FJ97</accession>
<comment type="function">
    <text evidence="1">DNA-dependent RNA polymerase catalyzes the transcription of DNA into RNA using the four ribonucleoside triphosphates as substrates.</text>
</comment>
<comment type="catalytic activity">
    <reaction evidence="1">
        <text>RNA(n) + a ribonucleoside 5'-triphosphate = RNA(n+1) + diphosphate</text>
        <dbReference type="Rhea" id="RHEA:21248"/>
        <dbReference type="Rhea" id="RHEA-COMP:14527"/>
        <dbReference type="Rhea" id="RHEA-COMP:17342"/>
        <dbReference type="ChEBI" id="CHEBI:33019"/>
        <dbReference type="ChEBI" id="CHEBI:61557"/>
        <dbReference type="ChEBI" id="CHEBI:140395"/>
        <dbReference type="EC" id="2.7.7.6"/>
    </reaction>
</comment>
<comment type="cofactor">
    <cofactor evidence="1">
        <name>Mg(2+)</name>
        <dbReference type="ChEBI" id="CHEBI:18420"/>
    </cofactor>
    <text evidence="1">Binds 1 Mg(2+) ion per subunit.</text>
</comment>
<comment type="cofactor">
    <cofactor evidence="1">
        <name>Zn(2+)</name>
        <dbReference type="ChEBI" id="CHEBI:29105"/>
    </cofactor>
    <text evidence="1">Binds 2 Zn(2+) ions per subunit.</text>
</comment>
<comment type="subunit">
    <text evidence="1">The RNAP catalytic core consists of 2 alpha, 1 beta, 1 beta' and 1 omega subunit. When a sigma factor is associated with the core the holoenzyme is formed, which can initiate transcription.</text>
</comment>
<comment type="similarity">
    <text evidence="1">Belongs to the RNA polymerase beta' chain family.</text>
</comment>
<comment type="sequence caution" evidence="2">
    <conflict type="erroneous initiation">
        <sequence resource="EMBL-CDS" id="ABD21625"/>
    </conflict>
    <text>Truncated N-terminus.</text>
</comment>
<protein>
    <recommendedName>
        <fullName evidence="1">DNA-directed RNA polymerase subunit beta'</fullName>
        <shortName evidence="1">RNAP subunit beta'</shortName>
        <ecNumber evidence="1">2.7.7.6</ecNumber>
    </recommendedName>
    <alternativeName>
        <fullName evidence="1">RNA polymerase subunit beta'</fullName>
    </alternativeName>
    <alternativeName>
        <fullName evidence="1">Transcriptase subunit beta'</fullName>
    </alternativeName>
</protein>
<name>RPOC_STAA3</name>
<keyword id="KW-0240">DNA-directed RNA polymerase</keyword>
<keyword id="KW-0460">Magnesium</keyword>
<keyword id="KW-0479">Metal-binding</keyword>
<keyword id="KW-0548">Nucleotidyltransferase</keyword>
<keyword id="KW-0804">Transcription</keyword>
<keyword id="KW-0808">Transferase</keyword>
<keyword id="KW-0862">Zinc</keyword>
<sequence>MIDVNNFHYMKIGLASPEKIRSWSFGEVKKPETINYRTLKPEKDGLFCERIFGPTKDWECSCGKYKRVRYKGMVCDRCGVEVTKSKVRRERMGHIELAAPVSHIWYFKGIPSRMGLLLDMSPRALEEVIYFASYVVVDPGPTGLEKKTLLSEAEFRDYYDKYPGQFVAKMGAEGIKDLLEEIDLDEELKLLRDELESATGQRLTRAIKRLEVVESFRNSGNKPSWMILDVLPIIPPEIRPMVQLDGGRFATSDLNDLYRRVINRNNRLKRLLDLGAPGIIVQNEKRMLQEAVDALIDNGRRGRPVTGPGNRPLKSLSHMLKGKQGRFRQNLLGKRVDYSGRSVIAVGPSLKMYQCGLPKEMALELFKPFVMKELVQREIATNIKNAKSKIERMDDEVWDVLEEVIREHPVLLNRAPTLHRLGIQAFEPTLVEGRAIRLHPLVTTAYNADFDGDQMAVHVPLSKEAQAEARMLMLAAQNILNPKDGKPVVTPSQDMVLGNYYLTLERKDAVNTGAIFNNTNEVLKAYANGFVHLHTRIGVHASSFNNPTFTEEQNKKILATSVGKIIFNEIIPDSFAYINEPTQENLERKTPNRYFIDPTTLGEGGLKEYFENEELIEPFNKKFLGNIIAEVFNRFSITDTSMMLDRMKDLGFKFSSKAGITVGVADIVVLPDKQQILDEHEKLVDRITKQFNRGLITEEERYNAVVEIWTDAKDQIQGELMQSLDKTNPIFMMSDSGARGNASNFTQLAGMRGLMAAPSGKIIELPITSSFREGLTVLEYFISTHGARKGLADTALKTADSGYLTRRLVDVAQDVIVREEDCGTDRGLLVSDIKEGTEMIEPFIERIEGRYSKETIHHPETDEIIIRPDELITPEIAKKITDAGIEQMYIRSAFTCNARHGVCEKCYGKNLATGEKVEVGEAVGTIAAQSIGEPGTQLTMRTFHTGGVAGSDITQGLPRIQEIFEARNPKGQAVITEIEGVVEDIKLAKDRQQEIVVKGANETRSYLASGTSRIIVEIGQPVQRGEVLTEGSIEPKNYLSVAGLNATESYLLKEVQKVYRMQGVEIDDKHVEVMVRQMLRKVRIIEAGDTKLLPGSLVDIHNFTDANREAFKHRKRPATAKPVLLGITKASLETESFLSAASFQETTRVLTDAAIKGKRDDLLGLKENVIIGKLIPAGTGMRRYSDVKYEKTAKPVAEVESQTEVTE</sequence>
<evidence type="ECO:0000255" key="1">
    <source>
        <dbReference type="HAMAP-Rule" id="MF_01322"/>
    </source>
</evidence>
<evidence type="ECO:0000305" key="2"/>
<proteinExistence type="inferred from homology"/>
<feature type="chain" id="PRO_0000240826" description="DNA-directed RNA polymerase subunit beta'">
    <location>
        <begin position="1"/>
        <end position="1207"/>
    </location>
</feature>
<feature type="binding site" evidence="1">
    <location>
        <position position="60"/>
    </location>
    <ligand>
        <name>Zn(2+)</name>
        <dbReference type="ChEBI" id="CHEBI:29105"/>
        <label>1</label>
    </ligand>
</feature>
<feature type="binding site" evidence="1">
    <location>
        <position position="62"/>
    </location>
    <ligand>
        <name>Zn(2+)</name>
        <dbReference type="ChEBI" id="CHEBI:29105"/>
        <label>1</label>
    </ligand>
</feature>
<feature type="binding site" evidence="1">
    <location>
        <position position="75"/>
    </location>
    <ligand>
        <name>Zn(2+)</name>
        <dbReference type="ChEBI" id="CHEBI:29105"/>
        <label>1</label>
    </ligand>
</feature>
<feature type="binding site" evidence="1">
    <location>
        <position position="78"/>
    </location>
    <ligand>
        <name>Zn(2+)</name>
        <dbReference type="ChEBI" id="CHEBI:29105"/>
        <label>1</label>
    </ligand>
</feature>
<feature type="binding site" evidence="1">
    <location>
        <position position="449"/>
    </location>
    <ligand>
        <name>Mg(2+)</name>
        <dbReference type="ChEBI" id="CHEBI:18420"/>
    </ligand>
</feature>
<feature type="binding site" evidence="1">
    <location>
        <position position="451"/>
    </location>
    <ligand>
        <name>Mg(2+)</name>
        <dbReference type="ChEBI" id="CHEBI:18420"/>
    </ligand>
</feature>
<feature type="binding site" evidence="1">
    <location>
        <position position="453"/>
    </location>
    <ligand>
        <name>Mg(2+)</name>
        <dbReference type="ChEBI" id="CHEBI:18420"/>
    </ligand>
</feature>
<feature type="binding site" evidence="1">
    <location>
        <position position="822"/>
    </location>
    <ligand>
        <name>Zn(2+)</name>
        <dbReference type="ChEBI" id="CHEBI:29105"/>
        <label>2</label>
    </ligand>
</feature>
<feature type="binding site" evidence="1">
    <location>
        <position position="896"/>
    </location>
    <ligand>
        <name>Zn(2+)</name>
        <dbReference type="ChEBI" id="CHEBI:29105"/>
        <label>2</label>
    </ligand>
</feature>
<feature type="binding site" evidence="1">
    <location>
        <position position="903"/>
    </location>
    <ligand>
        <name>Zn(2+)</name>
        <dbReference type="ChEBI" id="CHEBI:29105"/>
        <label>2</label>
    </ligand>
</feature>
<feature type="binding site" evidence="1">
    <location>
        <position position="906"/>
    </location>
    <ligand>
        <name>Zn(2+)</name>
        <dbReference type="ChEBI" id="CHEBI:29105"/>
        <label>2</label>
    </ligand>
</feature>
<reference key="1">
    <citation type="journal article" date="2006" name="Lancet">
        <title>Complete genome sequence of USA300, an epidemic clone of community-acquired meticillin-resistant Staphylococcus aureus.</title>
        <authorList>
            <person name="Diep B.A."/>
            <person name="Gill S.R."/>
            <person name="Chang R.F."/>
            <person name="Phan T.H."/>
            <person name="Chen J.H."/>
            <person name="Davidson M.G."/>
            <person name="Lin F."/>
            <person name="Lin J."/>
            <person name="Carleton H.A."/>
            <person name="Mongodin E.F."/>
            <person name="Sensabaugh G.F."/>
            <person name="Perdreau-Remington F."/>
        </authorList>
    </citation>
    <scope>NUCLEOTIDE SEQUENCE [LARGE SCALE GENOMIC DNA]</scope>
    <source>
        <strain>USA300</strain>
    </source>
</reference>
<organism>
    <name type="scientific">Staphylococcus aureus (strain USA300)</name>
    <dbReference type="NCBI Taxonomy" id="367830"/>
    <lineage>
        <taxon>Bacteria</taxon>
        <taxon>Bacillati</taxon>
        <taxon>Bacillota</taxon>
        <taxon>Bacilli</taxon>
        <taxon>Bacillales</taxon>
        <taxon>Staphylococcaceae</taxon>
        <taxon>Staphylococcus</taxon>
    </lineage>
</organism>
<dbReference type="EC" id="2.7.7.6" evidence="1"/>
<dbReference type="EMBL" id="CP000255">
    <property type="protein sequence ID" value="ABD21625.1"/>
    <property type="status" value="ALT_INIT"/>
    <property type="molecule type" value="Genomic_DNA"/>
</dbReference>
<dbReference type="SMR" id="Q2FJ97"/>
<dbReference type="KEGG" id="saa:SAUSA300_0528"/>
<dbReference type="HOGENOM" id="CLU_000524_3_1_9"/>
<dbReference type="OMA" id="QDMIIGL"/>
<dbReference type="Proteomes" id="UP000001939">
    <property type="component" value="Chromosome"/>
</dbReference>
<dbReference type="GO" id="GO:0000428">
    <property type="term" value="C:DNA-directed RNA polymerase complex"/>
    <property type="evidence" value="ECO:0007669"/>
    <property type="project" value="UniProtKB-KW"/>
</dbReference>
<dbReference type="GO" id="GO:0003677">
    <property type="term" value="F:DNA binding"/>
    <property type="evidence" value="ECO:0007669"/>
    <property type="project" value="UniProtKB-UniRule"/>
</dbReference>
<dbReference type="GO" id="GO:0003899">
    <property type="term" value="F:DNA-directed RNA polymerase activity"/>
    <property type="evidence" value="ECO:0007669"/>
    <property type="project" value="UniProtKB-UniRule"/>
</dbReference>
<dbReference type="GO" id="GO:0000287">
    <property type="term" value="F:magnesium ion binding"/>
    <property type="evidence" value="ECO:0007669"/>
    <property type="project" value="UniProtKB-UniRule"/>
</dbReference>
<dbReference type="GO" id="GO:0008270">
    <property type="term" value="F:zinc ion binding"/>
    <property type="evidence" value="ECO:0007669"/>
    <property type="project" value="UniProtKB-UniRule"/>
</dbReference>
<dbReference type="GO" id="GO:0006351">
    <property type="term" value="P:DNA-templated transcription"/>
    <property type="evidence" value="ECO:0007669"/>
    <property type="project" value="UniProtKB-UniRule"/>
</dbReference>
<dbReference type="CDD" id="cd02655">
    <property type="entry name" value="RNAP_beta'_C"/>
    <property type="match status" value="1"/>
</dbReference>
<dbReference type="CDD" id="cd01609">
    <property type="entry name" value="RNAP_beta'_N"/>
    <property type="match status" value="1"/>
</dbReference>
<dbReference type="FunFam" id="1.10.132.30:FF:000003">
    <property type="entry name" value="DNA-directed RNA polymerase subunit beta"/>
    <property type="match status" value="1"/>
</dbReference>
<dbReference type="FunFam" id="1.10.150.390:FF:000002">
    <property type="entry name" value="DNA-directed RNA polymerase subunit beta"/>
    <property type="match status" value="1"/>
</dbReference>
<dbReference type="FunFam" id="4.10.860.120:FF:000001">
    <property type="entry name" value="DNA-directed RNA polymerase subunit beta"/>
    <property type="match status" value="1"/>
</dbReference>
<dbReference type="Gene3D" id="1.10.132.30">
    <property type="match status" value="1"/>
</dbReference>
<dbReference type="Gene3D" id="1.10.150.390">
    <property type="match status" value="1"/>
</dbReference>
<dbReference type="Gene3D" id="1.10.1790.20">
    <property type="match status" value="1"/>
</dbReference>
<dbReference type="Gene3D" id="1.10.40.90">
    <property type="match status" value="1"/>
</dbReference>
<dbReference type="Gene3D" id="2.40.40.20">
    <property type="match status" value="1"/>
</dbReference>
<dbReference type="Gene3D" id="2.40.50.100">
    <property type="match status" value="1"/>
</dbReference>
<dbReference type="Gene3D" id="4.10.860.120">
    <property type="entry name" value="RNA polymerase II, clamp domain"/>
    <property type="match status" value="1"/>
</dbReference>
<dbReference type="Gene3D" id="1.10.274.100">
    <property type="entry name" value="RNA polymerase Rpb1, domain 3"/>
    <property type="match status" value="1"/>
</dbReference>
<dbReference type="HAMAP" id="MF_01322">
    <property type="entry name" value="RNApol_bact_RpoC"/>
    <property type="match status" value="1"/>
</dbReference>
<dbReference type="InterPro" id="IPR045867">
    <property type="entry name" value="DNA-dir_RpoC_beta_prime"/>
</dbReference>
<dbReference type="InterPro" id="IPR012754">
    <property type="entry name" value="DNA-dir_RpoC_beta_prime_bact"/>
</dbReference>
<dbReference type="InterPro" id="IPR000722">
    <property type="entry name" value="RNA_pol_asu"/>
</dbReference>
<dbReference type="InterPro" id="IPR006592">
    <property type="entry name" value="RNA_pol_N"/>
</dbReference>
<dbReference type="InterPro" id="IPR007080">
    <property type="entry name" value="RNA_pol_Rpb1_1"/>
</dbReference>
<dbReference type="InterPro" id="IPR007066">
    <property type="entry name" value="RNA_pol_Rpb1_3"/>
</dbReference>
<dbReference type="InterPro" id="IPR042102">
    <property type="entry name" value="RNA_pol_Rpb1_3_sf"/>
</dbReference>
<dbReference type="InterPro" id="IPR007083">
    <property type="entry name" value="RNA_pol_Rpb1_4"/>
</dbReference>
<dbReference type="InterPro" id="IPR007081">
    <property type="entry name" value="RNA_pol_Rpb1_5"/>
</dbReference>
<dbReference type="InterPro" id="IPR044893">
    <property type="entry name" value="RNA_pol_Rpb1_clamp_domain"/>
</dbReference>
<dbReference type="InterPro" id="IPR038120">
    <property type="entry name" value="Rpb1_funnel_sf"/>
</dbReference>
<dbReference type="NCBIfam" id="TIGR02386">
    <property type="entry name" value="rpoC_TIGR"/>
    <property type="match status" value="1"/>
</dbReference>
<dbReference type="PANTHER" id="PTHR19376">
    <property type="entry name" value="DNA-DIRECTED RNA POLYMERASE"/>
    <property type="match status" value="1"/>
</dbReference>
<dbReference type="PANTHER" id="PTHR19376:SF54">
    <property type="entry name" value="DNA-DIRECTED RNA POLYMERASE SUBUNIT BETA"/>
    <property type="match status" value="1"/>
</dbReference>
<dbReference type="Pfam" id="PF04997">
    <property type="entry name" value="RNA_pol_Rpb1_1"/>
    <property type="match status" value="1"/>
</dbReference>
<dbReference type="Pfam" id="PF00623">
    <property type="entry name" value="RNA_pol_Rpb1_2"/>
    <property type="match status" value="1"/>
</dbReference>
<dbReference type="Pfam" id="PF04983">
    <property type="entry name" value="RNA_pol_Rpb1_3"/>
    <property type="match status" value="1"/>
</dbReference>
<dbReference type="Pfam" id="PF05000">
    <property type="entry name" value="RNA_pol_Rpb1_4"/>
    <property type="match status" value="1"/>
</dbReference>
<dbReference type="Pfam" id="PF04998">
    <property type="entry name" value="RNA_pol_Rpb1_5"/>
    <property type="match status" value="1"/>
</dbReference>
<dbReference type="SMART" id="SM00663">
    <property type="entry name" value="RPOLA_N"/>
    <property type="match status" value="1"/>
</dbReference>
<dbReference type="SUPFAM" id="SSF64484">
    <property type="entry name" value="beta and beta-prime subunits of DNA dependent RNA-polymerase"/>
    <property type="match status" value="1"/>
</dbReference>
<gene>
    <name evidence="1" type="primary">rpoC</name>
    <name type="ordered locus">SAUSA300_0528</name>
</gene>